<proteinExistence type="evidence at protein level"/>
<reference key="1">
    <citation type="journal article" date="1999" name="Nature">
        <title>Sequence and analysis of chromosome 2 of the plant Arabidopsis thaliana.</title>
        <authorList>
            <person name="Lin X."/>
            <person name="Kaul S."/>
            <person name="Rounsley S.D."/>
            <person name="Shea T.P."/>
            <person name="Benito M.-I."/>
            <person name="Town C.D."/>
            <person name="Fujii C.Y."/>
            <person name="Mason T.M."/>
            <person name="Bowman C.L."/>
            <person name="Barnstead M.E."/>
            <person name="Feldblyum T.V."/>
            <person name="Buell C.R."/>
            <person name="Ketchum K.A."/>
            <person name="Lee J.J."/>
            <person name="Ronning C.M."/>
            <person name="Koo H.L."/>
            <person name="Moffat K.S."/>
            <person name="Cronin L.A."/>
            <person name="Shen M."/>
            <person name="Pai G."/>
            <person name="Van Aken S."/>
            <person name="Umayam L."/>
            <person name="Tallon L.J."/>
            <person name="Gill J.E."/>
            <person name="Adams M.D."/>
            <person name="Carrera A.J."/>
            <person name="Creasy T.H."/>
            <person name="Goodman H.M."/>
            <person name="Somerville C.R."/>
            <person name="Copenhaver G.P."/>
            <person name="Preuss D."/>
            <person name="Nierman W.C."/>
            <person name="White O."/>
            <person name="Eisen J.A."/>
            <person name="Salzberg S.L."/>
            <person name="Fraser C.M."/>
            <person name="Venter J.C."/>
        </authorList>
    </citation>
    <scope>NUCLEOTIDE SEQUENCE [LARGE SCALE GENOMIC DNA]</scope>
    <source>
        <strain>cv. Columbia</strain>
    </source>
</reference>
<reference key="2">
    <citation type="journal article" date="2017" name="Plant J.">
        <title>Araport11: a complete reannotation of the Arabidopsis thaliana reference genome.</title>
        <authorList>
            <person name="Cheng C.Y."/>
            <person name="Krishnakumar V."/>
            <person name="Chan A.P."/>
            <person name="Thibaud-Nissen F."/>
            <person name="Schobel S."/>
            <person name="Town C.D."/>
        </authorList>
    </citation>
    <scope>GENOME REANNOTATION</scope>
    <source>
        <strain>cv. Columbia</strain>
    </source>
</reference>
<reference key="3">
    <citation type="journal article" date="2003" name="Science">
        <title>Empirical analysis of transcriptional activity in the Arabidopsis genome.</title>
        <authorList>
            <person name="Yamada K."/>
            <person name="Lim J."/>
            <person name="Dale J.M."/>
            <person name="Chen H."/>
            <person name="Shinn P."/>
            <person name="Palm C.J."/>
            <person name="Southwick A.M."/>
            <person name="Wu H.C."/>
            <person name="Kim C.J."/>
            <person name="Nguyen M."/>
            <person name="Pham P.K."/>
            <person name="Cheuk R.F."/>
            <person name="Karlin-Newmann G."/>
            <person name="Liu S.X."/>
            <person name="Lam B."/>
            <person name="Sakano H."/>
            <person name="Wu T."/>
            <person name="Yu G."/>
            <person name="Miranda M."/>
            <person name="Quach H.L."/>
            <person name="Tripp M."/>
            <person name="Chang C.H."/>
            <person name="Lee J.M."/>
            <person name="Toriumi M.J."/>
            <person name="Chan M.M."/>
            <person name="Tang C.C."/>
            <person name="Onodera C.S."/>
            <person name="Deng J.M."/>
            <person name="Akiyama K."/>
            <person name="Ansari Y."/>
            <person name="Arakawa T."/>
            <person name="Banh J."/>
            <person name="Banno F."/>
            <person name="Bowser L."/>
            <person name="Brooks S.Y."/>
            <person name="Carninci P."/>
            <person name="Chao Q."/>
            <person name="Choy N."/>
            <person name="Enju A."/>
            <person name="Goldsmith A.D."/>
            <person name="Gurjal M."/>
            <person name="Hansen N.F."/>
            <person name="Hayashizaki Y."/>
            <person name="Johnson-Hopson C."/>
            <person name="Hsuan V.W."/>
            <person name="Iida K."/>
            <person name="Karnes M."/>
            <person name="Khan S."/>
            <person name="Koesema E."/>
            <person name="Ishida J."/>
            <person name="Jiang P.X."/>
            <person name="Jones T."/>
            <person name="Kawai J."/>
            <person name="Kamiya A."/>
            <person name="Meyers C."/>
            <person name="Nakajima M."/>
            <person name="Narusaka M."/>
            <person name="Seki M."/>
            <person name="Sakurai T."/>
            <person name="Satou M."/>
            <person name="Tamse R."/>
            <person name="Vaysberg M."/>
            <person name="Wallender E.K."/>
            <person name="Wong C."/>
            <person name="Yamamura Y."/>
            <person name="Yuan S."/>
            <person name="Shinozaki K."/>
            <person name="Davis R.W."/>
            <person name="Theologis A."/>
            <person name="Ecker J.R."/>
        </authorList>
    </citation>
    <scope>NUCLEOTIDE SEQUENCE [LARGE SCALE MRNA]</scope>
    <source>
        <strain>cv. Columbia</strain>
    </source>
</reference>
<reference key="4">
    <citation type="journal article" date="2011" name="Plant Cell">
        <title>Biosynthesis and defensive function of N?-acetylornithine, a jasmonate-induced Arabidopsis metabolite.</title>
        <authorList>
            <person name="Adio A.M."/>
            <person name="Casteel C.L."/>
            <person name="De Vos M."/>
            <person name="Kim J.H."/>
            <person name="Joshi V."/>
            <person name="Li B."/>
            <person name="Juery C."/>
            <person name="Daron J."/>
            <person name="Kliebenstein D.J."/>
            <person name="Jander G."/>
        </authorList>
    </citation>
    <scope>FUNCTION</scope>
    <scope>INDUCTION</scope>
    <scope>DISRUPTION PHENOTYPE</scope>
</reference>
<keyword id="KW-0002">3D-structure</keyword>
<keyword id="KW-0012">Acyltransferase</keyword>
<keyword id="KW-0611">Plant defense</keyword>
<keyword id="KW-1185">Reference proteome</keyword>
<keyword id="KW-0808">Transferase</keyword>
<dbReference type="EC" id="2.3.1.-"/>
<dbReference type="EMBL" id="AC005770">
    <property type="protein sequence ID" value="AAC79613.1"/>
    <property type="molecule type" value="Genomic_DNA"/>
</dbReference>
<dbReference type="EMBL" id="CP002685">
    <property type="protein sequence ID" value="AEC09628.1"/>
    <property type="molecule type" value="Genomic_DNA"/>
</dbReference>
<dbReference type="EMBL" id="AY054661">
    <property type="protein sequence ID" value="AAK96852.1"/>
    <property type="status" value="ALT_FRAME"/>
    <property type="molecule type" value="mRNA"/>
</dbReference>
<dbReference type="EMBL" id="AY072467">
    <property type="protein sequence ID" value="AAL66882.1"/>
    <property type="molecule type" value="mRNA"/>
</dbReference>
<dbReference type="PIR" id="C84812">
    <property type="entry name" value="C84812"/>
</dbReference>
<dbReference type="RefSeq" id="NP_565898.1">
    <property type="nucleotide sequence ID" value="NM_129460.4"/>
</dbReference>
<dbReference type="PDB" id="8XBN">
    <property type="method" value="X-ray"/>
    <property type="resolution" value="1.35 A"/>
    <property type="chains" value="A/C=19-228"/>
</dbReference>
<dbReference type="PDB" id="8XBP">
    <property type="method" value="X-ray"/>
    <property type="resolution" value="1.99 A"/>
    <property type="chains" value="A/Q=19-228"/>
</dbReference>
<dbReference type="PDB" id="8XJ5">
    <property type="method" value="X-ray"/>
    <property type="resolution" value="2.04 A"/>
    <property type="chains" value="A/Q=23-226"/>
</dbReference>
<dbReference type="PDBsum" id="8XBN"/>
<dbReference type="PDBsum" id="8XBP"/>
<dbReference type="PDBsum" id="8XJ5"/>
<dbReference type="SMR" id="Q9ZV05"/>
<dbReference type="BioGRID" id="3828">
    <property type="interactions" value="9"/>
</dbReference>
<dbReference type="FunCoup" id="Q9ZV05">
    <property type="interactions" value="363"/>
</dbReference>
<dbReference type="IntAct" id="Q9ZV05">
    <property type="interactions" value="5"/>
</dbReference>
<dbReference type="STRING" id="3702.Q9ZV05"/>
<dbReference type="iPTMnet" id="Q9ZV05"/>
<dbReference type="PaxDb" id="3702-AT2G39030.1"/>
<dbReference type="ProteomicsDB" id="251036"/>
<dbReference type="EnsemblPlants" id="AT2G39030.1">
    <property type="protein sequence ID" value="AT2G39030.1"/>
    <property type="gene ID" value="AT2G39030"/>
</dbReference>
<dbReference type="GeneID" id="818489"/>
<dbReference type="Gramene" id="AT2G39030.1">
    <property type="protein sequence ID" value="AT2G39030.1"/>
    <property type="gene ID" value="AT2G39030"/>
</dbReference>
<dbReference type="KEGG" id="ath:AT2G39030"/>
<dbReference type="Araport" id="AT2G39030"/>
<dbReference type="TAIR" id="AT2G39030">
    <property type="gene designation" value="NATA1"/>
</dbReference>
<dbReference type="eggNOG" id="KOG3216">
    <property type="taxonomic scope" value="Eukaryota"/>
</dbReference>
<dbReference type="HOGENOM" id="CLU_013985_41_0_1"/>
<dbReference type="InParanoid" id="Q9ZV05"/>
<dbReference type="OMA" id="RVEWIVI"/>
<dbReference type="OrthoDB" id="7305308at2759"/>
<dbReference type="PhylomeDB" id="Q9ZV05"/>
<dbReference type="BioCyc" id="ARA:AT2G39030-MONOMER"/>
<dbReference type="BioCyc" id="MetaCyc:AT2G39030-MONOMER"/>
<dbReference type="PRO" id="PR:Q9ZV05"/>
<dbReference type="Proteomes" id="UP000006548">
    <property type="component" value="Chromosome 2"/>
</dbReference>
<dbReference type="ExpressionAtlas" id="Q9ZV05">
    <property type="expression patterns" value="baseline and differential"/>
</dbReference>
<dbReference type="GO" id="GO:0008080">
    <property type="term" value="F:N-acetyltransferase activity"/>
    <property type="evidence" value="ECO:0000315"/>
    <property type="project" value="TAIR"/>
</dbReference>
<dbReference type="GO" id="GO:0006952">
    <property type="term" value="P:defense response"/>
    <property type="evidence" value="ECO:0007669"/>
    <property type="project" value="UniProtKB-KW"/>
</dbReference>
<dbReference type="GO" id="GO:0006591">
    <property type="term" value="P:ornithine metabolic process"/>
    <property type="evidence" value="ECO:0000315"/>
    <property type="project" value="TAIR"/>
</dbReference>
<dbReference type="GO" id="GO:0009753">
    <property type="term" value="P:response to jasmonic acid"/>
    <property type="evidence" value="ECO:0000270"/>
    <property type="project" value="TAIR"/>
</dbReference>
<dbReference type="CDD" id="cd04301">
    <property type="entry name" value="NAT_SF"/>
    <property type="match status" value="1"/>
</dbReference>
<dbReference type="FunFam" id="3.40.630.30:FF:000099">
    <property type="entry name" value="probable acetyltransferase NATA1-like"/>
    <property type="match status" value="1"/>
</dbReference>
<dbReference type="Gene3D" id="3.40.630.30">
    <property type="match status" value="1"/>
</dbReference>
<dbReference type="InterPro" id="IPR016181">
    <property type="entry name" value="Acyl_CoA_acyltransferase"/>
</dbReference>
<dbReference type="InterPro" id="IPR051016">
    <property type="entry name" value="Diverse_Substrate_AcTransf"/>
</dbReference>
<dbReference type="InterPro" id="IPR000182">
    <property type="entry name" value="GNAT_dom"/>
</dbReference>
<dbReference type="PANTHER" id="PTHR10545">
    <property type="entry name" value="DIAMINE N-ACETYLTRANSFERASE"/>
    <property type="match status" value="1"/>
</dbReference>
<dbReference type="PANTHER" id="PTHR10545:SF29">
    <property type="entry name" value="GH14572P-RELATED"/>
    <property type="match status" value="1"/>
</dbReference>
<dbReference type="Pfam" id="PF00583">
    <property type="entry name" value="Acetyltransf_1"/>
    <property type="match status" value="1"/>
</dbReference>
<dbReference type="SUPFAM" id="SSF55729">
    <property type="entry name" value="Acyl-CoA N-acyltransferases (Nat)"/>
    <property type="match status" value="1"/>
</dbReference>
<dbReference type="PROSITE" id="PS51186">
    <property type="entry name" value="GNAT"/>
    <property type="match status" value="1"/>
</dbReference>
<evidence type="ECO:0000250" key="1"/>
<evidence type="ECO:0000255" key="2">
    <source>
        <dbReference type="PROSITE-ProRule" id="PRU00532"/>
    </source>
</evidence>
<evidence type="ECO:0000256" key="3">
    <source>
        <dbReference type="SAM" id="MobiDB-lite"/>
    </source>
</evidence>
<evidence type="ECO:0000269" key="4">
    <source>
    </source>
</evidence>
<evidence type="ECO:0000305" key="5"/>
<protein>
    <recommendedName>
        <fullName>L-ornithine N5-acetyltransferase NATA1</fullName>
        <ecNumber>2.3.1.-</ecNumber>
    </recommendedName>
    <alternativeName>
        <fullName>Protein N-ACETYLTRANSFERASE ACTIVITY 1</fullName>
    </alternativeName>
</protein>
<feature type="chain" id="PRO_0000423400" description="L-ornithine N5-acetyltransferase NATA1">
    <location>
        <begin position="1"/>
        <end position="228"/>
    </location>
</feature>
<feature type="domain" description="N-acetyltransferase" evidence="2">
    <location>
        <begin position="77"/>
        <end position="227"/>
    </location>
</feature>
<feature type="region of interest" description="Disordered" evidence="3">
    <location>
        <begin position="1"/>
        <end position="21"/>
    </location>
</feature>
<feature type="binding site" evidence="1">
    <location>
        <begin position="153"/>
        <end position="155"/>
    </location>
    <ligand>
        <name>acetyl-CoA</name>
        <dbReference type="ChEBI" id="CHEBI:57288"/>
    </ligand>
</feature>
<feature type="binding site" evidence="1">
    <location>
        <begin position="161"/>
        <end position="166"/>
    </location>
    <ligand>
        <name>acetyl-CoA</name>
        <dbReference type="ChEBI" id="CHEBI:57288"/>
    </ligand>
</feature>
<feature type="binding site" evidence="1">
    <location>
        <begin position="192"/>
        <end position="195"/>
    </location>
    <ligand>
        <name>acetyl-CoA</name>
        <dbReference type="ChEBI" id="CHEBI:57288"/>
    </ligand>
</feature>
<feature type="binding site" evidence="1">
    <location>
        <position position="199"/>
    </location>
    <ligand>
        <name>acetyl-CoA</name>
        <dbReference type="ChEBI" id="CHEBI:57288"/>
    </ligand>
</feature>
<name>NATA1_ARATH</name>
<gene>
    <name type="primary">NATA1</name>
    <name type="ordered locus">At2g39030</name>
    <name type="ORF">T7F6.20</name>
</gene>
<accession>Q9ZV05</accession>
<accession>Q93XX7</accession>
<comment type="function">
    <text evidence="4">Acetyltransferase that converts ornithine to N5-acetylornithine, which is likely used in plant defense.</text>
</comment>
<comment type="induction">
    <text evidence="4">By methyl jasmonate, and wounding by the aphid M.persicae, and the lepidopteran herbivores P.rapae (white cabbage butterfly) and P.xylostella (diamondback moth).</text>
</comment>
<comment type="disruption phenotype">
    <text evidence="4">No visible phenotype under normal growth conditions, but mutant plants are unable to produce N5-acetylornithine in response to methyl jasmonate.</text>
</comment>
<comment type="similarity">
    <text evidence="5">Belongs to the acetyltransferase family.</text>
</comment>
<comment type="sequence caution" evidence="5">
    <conflict type="frameshift">
        <sequence resource="EMBL-CDS" id="AAK96852"/>
    </conflict>
</comment>
<sequence length="228" mass="25821">MAPPTAAPEPNTVPETSPTGHRMFSRIRLATPTDVPFIHKLIHQMAVFERLTHLFVATESGLASTLFNSRPFQAVTVFLLEISPSPFPTTHDASSPDFTPFLETHKVDLPIEDPDREKFLPDKLNDVVVAGFVLFFPNYPSFLAKQGFYIEDIFMREPYRRKGFGKLLLTAVAKQAVKLGVGRVEWIVIDWNVNAINFYEQMGAQVFKEWRLCRLTGDALQAIDKLNI</sequence>
<organism>
    <name type="scientific">Arabidopsis thaliana</name>
    <name type="common">Mouse-ear cress</name>
    <dbReference type="NCBI Taxonomy" id="3702"/>
    <lineage>
        <taxon>Eukaryota</taxon>
        <taxon>Viridiplantae</taxon>
        <taxon>Streptophyta</taxon>
        <taxon>Embryophyta</taxon>
        <taxon>Tracheophyta</taxon>
        <taxon>Spermatophyta</taxon>
        <taxon>Magnoliopsida</taxon>
        <taxon>eudicotyledons</taxon>
        <taxon>Gunneridae</taxon>
        <taxon>Pentapetalae</taxon>
        <taxon>rosids</taxon>
        <taxon>malvids</taxon>
        <taxon>Brassicales</taxon>
        <taxon>Brassicaceae</taxon>
        <taxon>Camelineae</taxon>
        <taxon>Arabidopsis</taxon>
    </lineage>
</organism>